<protein>
    <recommendedName>
        <fullName evidence="1">Ribosome-binding factor A</fullName>
    </recommendedName>
</protein>
<feature type="chain" id="PRO_1000088890" description="Ribosome-binding factor A">
    <location>
        <begin position="1"/>
        <end position="143"/>
    </location>
</feature>
<feature type="region of interest" description="Disordered" evidence="2">
    <location>
        <begin position="123"/>
        <end position="143"/>
    </location>
</feature>
<keyword id="KW-0963">Cytoplasm</keyword>
<keyword id="KW-0690">Ribosome biogenesis</keyword>
<name>RBFA_FRATM</name>
<dbReference type="EMBL" id="CP000915">
    <property type="protein sequence ID" value="ACD30213.1"/>
    <property type="molecule type" value="Genomic_DNA"/>
</dbReference>
<dbReference type="SMR" id="B2SEW8"/>
<dbReference type="KEGG" id="ftm:FTM_0115"/>
<dbReference type="HOGENOM" id="CLU_089475_5_0_6"/>
<dbReference type="GO" id="GO:0005829">
    <property type="term" value="C:cytosol"/>
    <property type="evidence" value="ECO:0007669"/>
    <property type="project" value="TreeGrafter"/>
</dbReference>
<dbReference type="GO" id="GO:0043024">
    <property type="term" value="F:ribosomal small subunit binding"/>
    <property type="evidence" value="ECO:0007669"/>
    <property type="project" value="TreeGrafter"/>
</dbReference>
<dbReference type="GO" id="GO:0030490">
    <property type="term" value="P:maturation of SSU-rRNA"/>
    <property type="evidence" value="ECO:0007669"/>
    <property type="project" value="UniProtKB-UniRule"/>
</dbReference>
<dbReference type="Gene3D" id="3.30.300.20">
    <property type="match status" value="1"/>
</dbReference>
<dbReference type="HAMAP" id="MF_00003">
    <property type="entry name" value="RbfA"/>
    <property type="match status" value="1"/>
</dbReference>
<dbReference type="InterPro" id="IPR015946">
    <property type="entry name" value="KH_dom-like_a/b"/>
</dbReference>
<dbReference type="InterPro" id="IPR000238">
    <property type="entry name" value="RbfA"/>
</dbReference>
<dbReference type="InterPro" id="IPR023799">
    <property type="entry name" value="RbfA_dom_sf"/>
</dbReference>
<dbReference type="InterPro" id="IPR020053">
    <property type="entry name" value="Ribosome-bd_factorA_CS"/>
</dbReference>
<dbReference type="NCBIfam" id="TIGR00082">
    <property type="entry name" value="rbfA"/>
    <property type="match status" value="1"/>
</dbReference>
<dbReference type="PANTHER" id="PTHR33515">
    <property type="entry name" value="RIBOSOME-BINDING FACTOR A, CHLOROPLASTIC-RELATED"/>
    <property type="match status" value="1"/>
</dbReference>
<dbReference type="PANTHER" id="PTHR33515:SF1">
    <property type="entry name" value="RIBOSOME-BINDING FACTOR A, CHLOROPLASTIC-RELATED"/>
    <property type="match status" value="1"/>
</dbReference>
<dbReference type="Pfam" id="PF02033">
    <property type="entry name" value="RBFA"/>
    <property type="match status" value="1"/>
</dbReference>
<dbReference type="SUPFAM" id="SSF89919">
    <property type="entry name" value="Ribosome-binding factor A, RbfA"/>
    <property type="match status" value="1"/>
</dbReference>
<dbReference type="PROSITE" id="PS01319">
    <property type="entry name" value="RBFA"/>
    <property type="match status" value="1"/>
</dbReference>
<organism>
    <name type="scientific">Francisella tularensis subsp. mediasiatica (strain FSC147)</name>
    <dbReference type="NCBI Taxonomy" id="441952"/>
    <lineage>
        <taxon>Bacteria</taxon>
        <taxon>Pseudomonadati</taxon>
        <taxon>Pseudomonadota</taxon>
        <taxon>Gammaproteobacteria</taxon>
        <taxon>Thiotrichales</taxon>
        <taxon>Francisellaceae</taxon>
        <taxon>Francisella</taxon>
    </lineage>
</organism>
<gene>
    <name evidence="1" type="primary">rbfA</name>
    <name type="ordered locus">FTM_0115</name>
</gene>
<reference key="1">
    <citation type="journal article" date="2009" name="PLoS Pathog.">
        <title>Molecular evolutionary consequences of niche restriction in Francisella tularensis, a facultative intracellular pathogen.</title>
        <authorList>
            <person name="Larsson P."/>
            <person name="Elfsmark D."/>
            <person name="Svensson K."/>
            <person name="Wikstroem P."/>
            <person name="Forsman M."/>
            <person name="Brettin T."/>
            <person name="Keim P."/>
            <person name="Johansson A."/>
        </authorList>
    </citation>
    <scope>NUCLEOTIDE SEQUENCE [LARGE SCALE GENOMIC DNA]</scope>
    <source>
        <strain>FSC147</strain>
    </source>
</reference>
<accession>B2SEW8</accession>
<proteinExistence type="inferred from homology"/>
<comment type="function">
    <text evidence="1">One of several proteins that assist in the late maturation steps of the functional core of the 30S ribosomal subunit. Associates with free 30S ribosomal subunits (but not with 30S subunits that are part of 70S ribosomes or polysomes). Required for efficient processing of 16S rRNA. May interact with the 5'-terminal helix region of 16S rRNA.</text>
</comment>
<comment type="subunit">
    <text evidence="1">Monomer. Binds 30S ribosomal subunits, but not 50S ribosomal subunits or 70S ribosomes.</text>
</comment>
<comment type="subcellular location">
    <subcellularLocation>
        <location evidence="1">Cytoplasm</location>
    </subcellularLocation>
</comment>
<comment type="similarity">
    <text evidence="1">Belongs to the RbfA family.</text>
</comment>
<sequence length="143" mass="16416">MAAEGRVQRVASEFQKVISLLLRTRIKDAKLASATITEVDLSKDLSYAKIYYTCLAIEDAEYIDKAFEKSKGFFRSSIAKSLSLRIVPNLKFIYDTSLDYGMQMEEKIQQALEADSKIIKQDDKSLQENYKQNDKETKAEKLR</sequence>
<evidence type="ECO:0000255" key="1">
    <source>
        <dbReference type="HAMAP-Rule" id="MF_00003"/>
    </source>
</evidence>
<evidence type="ECO:0000256" key="2">
    <source>
        <dbReference type="SAM" id="MobiDB-lite"/>
    </source>
</evidence>